<evidence type="ECO:0000255" key="1">
    <source>
        <dbReference type="HAMAP-Rule" id="MF_01652"/>
    </source>
</evidence>
<feature type="chain" id="PRO_0000337635" description="3-(3-hydroxy-phenyl)propionate/3-hydroxycinnamic acid hydroxylase">
    <location>
        <begin position="1"/>
        <end position="569"/>
    </location>
</feature>
<feature type="binding site" evidence="1">
    <location>
        <begin position="8"/>
        <end position="37"/>
    </location>
    <ligand>
        <name>FAD</name>
        <dbReference type="ChEBI" id="CHEBI:57692"/>
    </ligand>
</feature>
<feature type="binding site" evidence="1">
    <location>
        <begin position="273"/>
        <end position="283"/>
    </location>
    <ligand>
        <name>FAD</name>
        <dbReference type="ChEBI" id="CHEBI:57692"/>
    </ligand>
</feature>
<accession>A4T8B6</accession>
<gene>
    <name evidence="1" type="primary">mhpA</name>
    <name type="ordered locus">Mflv_2401</name>
</gene>
<organism>
    <name type="scientific">Mycolicibacterium gilvum (strain PYR-GCK)</name>
    <name type="common">Mycobacterium gilvum (strain PYR-GCK)</name>
    <dbReference type="NCBI Taxonomy" id="350054"/>
    <lineage>
        <taxon>Bacteria</taxon>
        <taxon>Bacillati</taxon>
        <taxon>Actinomycetota</taxon>
        <taxon>Actinomycetes</taxon>
        <taxon>Mycobacteriales</taxon>
        <taxon>Mycobacteriaceae</taxon>
        <taxon>Mycolicibacterium</taxon>
    </lineage>
</organism>
<dbReference type="EC" id="1.14.13.127" evidence="1"/>
<dbReference type="EMBL" id="CP000656">
    <property type="protein sequence ID" value="ABP44878.1"/>
    <property type="molecule type" value="Genomic_DNA"/>
</dbReference>
<dbReference type="SMR" id="A4T8B6"/>
<dbReference type="STRING" id="350054.Mflv_2401"/>
<dbReference type="KEGG" id="mgi:Mflv_2401"/>
<dbReference type="eggNOG" id="COG0654">
    <property type="taxonomic scope" value="Bacteria"/>
</dbReference>
<dbReference type="HOGENOM" id="CLU_009665_20_2_11"/>
<dbReference type="OrthoDB" id="8670884at2"/>
<dbReference type="UniPathway" id="UPA00714"/>
<dbReference type="GO" id="GO:0008688">
    <property type="term" value="F:3-(3-hydroxyphenyl)propionate hydroxylase activity"/>
    <property type="evidence" value="ECO:0007669"/>
    <property type="project" value="UniProtKB-UniRule"/>
</dbReference>
<dbReference type="GO" id="GO:0071949">
    <property type="term" value="F:FAD binding"/>
    <property type="evidence" value="ECO:0007669"/>
    <property type="project" value="InterPro"/>
</dbReference>
<dbReference type="GO" id="GO:0019622">
    <property type="term" value="P:3-(3-hydroxy)phenylpropionate catabolic process"/>
    <property type="evidence" value="ECO:0007669"/>
    <property type="project" value="UniProtKB-UniRule"/>
</dbReference>
<dbReference type="GO" id="GO:0019380">
    <property type="term" value="P:3-phenylpropionate catabolic process"/>
    <property type="evidence" value="ECO:0007669"/>
    <property type="project" value="UniProtKB-UniPathway"/>
</dbReference>
<dbReference type="Gene3D" id="3.30.70.2450">
    <property type="match status" value="1"/>
</dbReference>
<dbReference type="Gene3D" id="3.50.50.60">
    <property type="entry name" value="FAD/NAD(P)-binding domain"/>
    <property type="match status" value="1"/>
</dbReference>
<dbReference type="HAMAP" id="MF_01652">
    <property type="entry name" value="MhpA"/>
    <property type="match status" value="1"/>
</dbReference>
<dbReference type="InterPro" id="IPR023786">
    <property type="entry name" value="3-HPP/3HCI_hydroxylase"/>
</dbReference>
<dbReference type="InterPro" id="IPR002938">
    <property type="entry name" value="FAD-bd"/>
</dbReference>
<dbReference type="InterPro" id="IPR036188">
    <property type="entry name" value="FAD/NAD-bd_sf"/>
</dbReference>
<dbReference type="InterPro" id="IPR050631">
    <property type="entry name" value="PheA/TfdB_FAD_monoxygenase"/>
</dbReference>
<dbReference type="NCBIfam" id="NF004828">
    <property type="entry name" value="PRK06183.1-2"/>
    <property type="match status" value="1"/>
</dbReference>
<dbReference type="NCBIfam" id="NF004829">
    <property type="entry name" value="PRK06183.1-3"/>
    <property type="match status" value="1"/>
</dbReference>
<dbReference type="NCBIfam" id="NF004831">
    <property type="entry name" value="PRK06183.1-5"/>
    <property type="match status" value="1"/>
</dbReference>
<dbReference type="PANTHER" id="PTHR43476">
    <property type="entry name" value="3-(3-HYDROXY-PHENYL)PROPIONATE/3-HYDROXYCINNAMIC ACID HYDROXYLASE"/>
    <property type="match status" value="1"/>
</dbReference>
<dbReference type="PANTHER" id="PTHR43476:SF3">
    <property type="entry name" value="FAD-BINDING MONOOXYGENASE"/>
    <property type="match status" value="1"/>
</dbReference>
<dbReference type="Pfam" id="PF01494">
    <property type="entry name" value="FAD_binding_3"/>
    <property type="match status" value="1"/>
</dbReference>
<dbReference type="PRINTS" id="PR00420">
    <property type="entry name" value="RNGMNOXGNASE"/>
</dbReference>
<dbReference type="SUPFAM" id="SSF51905">
    <property type="entry name" value="FAD/NAD(P)-binding domain"/>
    <property type="match status" value="1"/>
</dbReference>
<keyword id="KW-0058">Aromatic hydrocarbons catabolism</keyword>
<keyword id="KW-0274">FAD</keyword>
<keyword id="KW-0285">Flavoprotein</keyword>
<keyword id="KW-0520">NAD</keyword>
<keyword id="KW-0560">Oxidoreductase</keyword>
<protein>
    <recommendedName>
        <fullName evidence="1">3-(3-hydroxy-phenyl)propionate/3-hydroxycinnamic acid hydroxylase</fullName>
        <shortName evidence="1">3-HCI hydroxylase</shortName>
        <shortName evidence="1">3-HPP hydroxylase</shortName>
        <ecNumber evidence="1">1.14.13.127</ecNumber>
    </recommendedName>
</protein>
<name>MHPA_MYCGI</name>
<reference key="1">
    <citation type="submission" date="2007-04" db="EMBL/GenBank/DDBJ databases">
        <title>Complete sequence of chromosome of Mycobacterium gilvum PYR-GCK.</title>
        <authorList>
            <consortium name="US DOE Joint Genome Institute"/>
            <person name="Copeland A."/>
            <person name="Lucas S."/>
            <person name="Lapidus A."/>
            <person name="Barry K."/>
            <person name="Detter J.C."/>
            <person name="Glavina del Rio T."/>
            <person name="Hammon N."/>
            <person name="Israni S."/>
            <person name="Dalin E."/>
            <person name="Tice H."/>
            <person name="Pitluck S."/>
            <person name="Chain P."/>
            <person name="Malfatti S."/>
            <person name="Shin M."/>
            <person name="Vergez L."/>
            <person name="Schmutz J."/>
            <person name="Larimer F."/>
            <person name="Land M."/>
            <person name="Hauser L."/>
            <person name="Kyrpides N."/>
            <person name="Mikhailova N."/>
            <person name="Miller C."/>
            <person name="Richardson P."/>
        </authorList>
    </citation>
    <scope>NUCLEOTIDE SEQUENCE [LARGE SCALE GENOMIC DNA]</scope>
    <source>
        <strain>PYR-GCK</strain>
    </source>
</reference>
<comment type="function">
    <text evidence="1">Catalyzes the insertion of one atom of molecular oxygen into position 2 of the phenyl ring of 3-(3-hydroxyphenyl)propionate (3-HPP) and hydroxycinnamic acid (3HCI).</text>
</comment>
<comment type="catalytic activity">
    <reaction evidence="1">
        <text>3-(3-hydroxyphenyl)propanoate + NADH + O2 + H(+) = 3-(2,3-dihydroxyphenyl)propanoate + NAD(+) + H2O</text>
        <dbReference type="Rhea" id="RHEA:24785"/>
        <dbReference type="ChEBI" id="CHEBI:15377"/>
        <dbReference type="ChEBI" id="CHEBI:15378"/>
        <dbReference type="ChEBI" id="CHEBI:15379"/>
        <dbReference type="ChEBI" id="CHEBI:46951"/>
        <dbReference type="ChEBI" id="CHEBI:57277"/>
        <dbReference type="ChEBI" id="CHEBI:57540"/>
        <dbReference type="ChEBI" id="CHEBI:57945"/>
        <dbReference type="EC" id="1.14.13.127"/>
    </reaction>
</comment>
<comment type="catalytic activity">
    <reaction evidence="1">
        <text>(2E)-3-(3-hydroxyphenyl)prop-2-enoate + NADH + O2 + H(+) = (2E)-3-(2,3-dihydroxyphenyl)prop-2-enoate + NAD(+) + H2O</text>
        <dbReference type="Rhea" id="RHEA:27846"/>
        <dbReference type="ChEBI" id="CHEBI:15377"/>
        <dbReference type="ChEBI" id="CHEBI:15378"/>
        <dbReference type="ChEBI" id="CHEBI:15379"/>
        <dbReference type="ChEBI" id="CHEBI:47928"/>
        <dbReference type="ChEBI" id="CHEBI:57540"/>
        <dbReference type="ChEBI" id="CHEBI:57945"/>
        <dbReference type="ChEBI" id="CHEBI:58642"/>
        <dbReference type="EC" id="1.14.13.127"/>
    </reaction>
</comment>
<comment type="cofactor">
    <cofactor evidence="1">
        <name>FAD</name>
        <dbReference type="ChEBI" id="CHEBI:57692"/>
    </cofactor>
</comment>
<comment type="pathway">
    <text evidence="1">Aromatic compound metabolism; 3-phenylpropanoate degradation.</text>
</comment>
<comment type="similarity">
    <text evidence="1">Belongs to the PheA/TfdB FAD monooxygenase family.</text>
</comment>
<proteinExistence type="inferred from homology"/>
<sequence>MTEQTDVDVVIVGAGPAGLTLANILGLEGVRVLVVDERDKLIDYPRGVGLDDESLRTFQAIGLVDRVLPHTVPNQILRFFDAKRNLLAEMAPPDARFGWPKRNGFVQPMVDAELFGGLQRFDNVEVRFGHRMHQCTQTTDRVEVEFDGGQASVSARYVVGCDGGRSVTRRLMGVSFDGTTSSTRWLVVDIANDPLGHPNSEVGADPRRPYVSIAIAHGIRRFEFMIHPDETDEEADDPAFVRRMLGQLIPYPERVDMIRHRVYTHHSRIAGSFREGRLMLAGDAAHLMPVWQGQGYNSGIRDAANLGWKLAAVVTGRAGEELLDTYDVERRKHARAMIDLSTMVGRVISPTNRKVAALRDRVIHAASAVPSLKRYVLEMRFKPMPRYQQGAVLHHAHAAPNSPTGTLFIQPRVDTRDTQNALLDDVLGTGFAVVCWSNNLRAVLGEEAFGRWKALGAKFVEVRPMSQLRWPGHDDPDVAVIGDRTGALKAWFDVHTESVLFVRPDRCIAAACIAQRAPEISEGLFAALHLTSGAHLTQGGGTDGEKPDRAVLHVAQPAAESSGTGAGTS</sequence>